<evidence type="ECO:0000255" key="1">
    <source>
        <dbReference type="HAMAP-Rule" id="MF_00318"/>
    </source>
</evidence>
<feature type="chain" id="PRO_1000189960" description="Enolase">
    <location>
        <begin position="1"/>
        <end position="400"/>
    </location>
</feature>
<feature type="active site" description="Proton donor" evidence="1">
    <location>
        <position position="195"/>
    </location>
</feature>
<feature type="active site" description="Proton acceptor" evidence="1">
    <location>
        <position position="326"/>
    </location>
</feature>
<feature type="binding site" evidence="1">
    <location>
        <position position="153"/>
    </location>
    <ligand>
        <name>(2R)-2-phosphoglycerate</name>
        <dbReference type="ChEBI" id="CHEBI:58289"/>
    </ligand>
</feature>
<feature type="binding site" evidence="1">
    <location>
        <position position="231"/>
    </location>
    <ligand>
        <name>Mg(2+)</name>
        <dbReference type="ChEBI" id="CHEBI:18420"/>
    </ligand>
</feature>
<feature type="binding site" evidence="1">
    <location>
        <position position="274"/>
    </location>
    <ligand>
        <name>Mg(2+)</name>
        <dbReference type="ChEBI" id="CHEBI:18420"/>
    </ligand>
</feature>
<feature type="binding site" evidence="1">
    <location>
        <position position="301"/>
    </location>
    <ligand>
        <name>Mg(2+)</name>
        <dbReference type="ChEBI" id="CHEBI:18420"/>
    </ligand>
</feature>
<feature type="binding site" evidence="1">
    <location>
        <position position="326"/>
    </location>
    <ligand>
        <name>(2R)-2-phosphoglycerate</name>
        <dbReference type="ChEBI" id="CHEBI:58289"/>
    </ligand>
</feature>
<feature type="binding site" evidence="1">
    <location>
        <position position="355"/>
    </location>
    <ligand>
        <name>(2R)-2-phosphoglycerate</name>
        <dbReference type="ChEBI" id="CHEBI:58289"/>
    </ligand>
</feature>
<feature type="binding site" evidence="1">
    <location>
        <position position="356"/>
    </location>
    <ligand>
        <name>(2R)-2-phosphoglycerate</name>
        <dbReference type="ChEBI" id="CHEBI:58289"/>
    </ligand>
</feature>
<feature type="binding site" evidence="1">
    <location>
        <position position="377"/>
    </location>
    <ligand>
        <name>(2R)-2-phosphoglycerate</name>
        <dbReference type="ChEBI" id="CHEBI:58289"/>
    </ligand>
</feature>
<keyword id="KW-0963">Cytoplasm</keyword>
<keyword id="KW-0324">Glycolysis</keyword>
<keyword id="KW-0456">Lyase</keyword>
<keyword id="KW-0460">Magnesium</keyword>
<keyword id="KW-0479">Metal-binding</keyword>
<keyword id="KW-1185">Reference proteome</keyword>
<keyword id="KW-0964">Secreted</keyword>
<protein>
    <recommendedName>
        <fullName evidence="1">Enolase</fullName>
        <ecNumber evidence="1">4.2.1.11</ecNumber>
    </recommendedName>
    <alternativeName>
        <fullName evidence="1">2-phospho-D-glycerate hydro-lyase</fullName>
    </alternativeName>
    <alternativeName>
        <fullName evidence="1">2-phosphoglycerate dehydratase</fullName>
    </alternativeName>
</protein>
<reference key="1">
    <citation type="journal article" date="2016" name="Stand. Genomic Sci.">
        <title>Complete genome sequence of the Antarctic Halorubrum lacusprofundi type strain ACAM 34.</title>
        <authorList>
            <person name="Anderson I.J."/>
            <person name="DasSarma P."/>
            <person name="Lucas S."/>
            <person name="Copeland A."/>
            <person name="Lapidus A."/>
            <person name="Del Rio T.G."/>
            <person name="Tice H."/>
            <person name="Dalin E."/>
            <person name="Bruce D.C."/>
            <person name="Goodwin L."/>
            <person name="Pitluck S."/>
            <person name="Sims D."/>
            <person name="Brettin T.S."/>
            <person name="Detter J.C."/>
            <person name="Han C.S."/>
            <person name="Larimer F."/>
            <person name="Hauser L."/>
            <person name="Land M."/>
            <person name="Ivanova N."/>
            <person name="Richardson P."/>
            <person name="Cavicchioli R."/>
            <person name="DasSarma S."/>
            <person name="Woese C.R."/>
            <person name="Kyrpides N.C."/>
        </authorList>
    </citation>
    <scope>NUCLEOTIDE SEQUENCE [LARGE SCALE GENOMIC DNA]</scope>
    <source>
        <strain>ATCC 49239 / DSM 5036 / JCM 8891 / ACAM 34</strain>
    </source>
</reference>
<proteinExistence type="inferred from homology"/>
<accession>B9LPW6</accession>
<gene>
    <name evidence="1" type="primary">eno</name>
    <name type="ordered locus">Hlac_1825</name>
</gene>
<sequence length="400" mass="42081">MTRITGISLRRVLDSRGNPTVEADVLTESGGFGRGAAPSGASTGEYEAIELPANESIAKAREHAVPRLEGVYAGDQRAVDNALRAADGTDDFSAIGANSAVAISMAAAKAAADVLGAPLYQHLGGAFRGENFPIPLGNVVGGGEHAKEATHIQEFLAAPVGAPSVSEAVFANAAVHAAVADVLDERGVPAAKGDEGAWAPPISDADAFEVVDEAVDRVEEDVGFEIRFGLDMAAAELYDDDQEAYVYGEETKSTDEQIDYVADLVDEYDLAYVEDPLDENDYEAFAELTDRVGDRTMICGDDLFVTNVERLQEGIDTGAANSILIKPNQIGTLSDTFDAIELAARNGYETIISHRSGETEDTTIAHLAVATDAGFIKTGTVGGERTAKLNELVRIADDAV</sequence>
<comment type="function">
    <text evidence="1">Catalyzes the reversible conversion of 2-phosphoglycerate (2-PG) into phosphoenolpyruvate (PEP). It is essential for the degradation of carbohydrates via glycolysis.</text>
</comment>
<comment type="catalytic activity">
    <reaction evidence="1">
        <text>(2R)-2-phosphoglycerate = phosphoenolpyruvate + H2O</text>
        <dbReference type="Rhea" id="RHEA:10164"/>
        <dbReference type="ChEBI" id="CHEBI:15377"/>
        <dbReference type="ChEBI" id="CHEBI:58289"/>
        <dbReference type="ChEBI" id="CHEBI:58702"/>
        <dbReference type="EC" id="4.2.1.11"/>
    </reaction>
</comment>
<comment type="cofactor">
    <cofactor evidence="1">
        <name>Mg(2+)</name>
        <dbReference type="ChEBI" id="CHEBI:18420"/>
    </cofactor>
    <text evidence="1">Binds a second Mg(2+) ion via substrate during catalysis.</text>
</comment>
<comment type="pathway">
    <text evidence="1">Carbohydrate degradation; glycolysis; pyruvate from D-glyceraldehyde 3-phosphate: step 4/5.</text>
</comment>
<comment type="subcellular location">
    <subcellularLocation>
        <location evidence="1">Cytoplasm</location>
    </subcellularLocation>
    <subcellularLocation>
        <location evidence="1">Secreted</location>
    </subcellularLocation>
    <subcellularLocation>
        <location evidence="1">Cell surface</location>
    </subcellularLocation>
    <text evidence="1">Fractions of enolase are present in both the cytoplasm and on the cell surface.</text>
</comment>
<comment type="similarity">
    <text evidence="1">Belongs to the enolase family.</text>
</comment>
<name>ENO_HALLT</name>
<dbReference type="EC" id="4.2.1.11" evidence="1"/>
<dbReference type="EMBL" id="CP001365">
    <property type="protein sequence ID" value="ACM57404.1"/>
    <property type="molecule type" value="Genomic_DNA"/>
</dbReference>
<dbReference type="RefSeq" id="WP_015910538.1">
    <property type="nucleotide sequence ID" value="NC_012029.1"/>
</dbReference>
<dbReference type="SMR" id="B9LPW6"/>
<dbReference type="GeneID" id="7400017"/>
<dbReference type="KEGG" id="hla:Hlac_1825"/>
<dbReference type="eggNOG" id="arCOG01169">
    <property type="taxonomic scope" value="Archaea"/>
</dbReference>
<dbReference type="HOGENOM" id="CLU_031223_0_1_2"/>
<dbReference type="UniPathway" id="UPA00109">
    <property type="reaction ID" value="UER00187"/>
</dbReference>
<dbReference type="Proteomes" id="UP000000740">
    <property type="component" value="Chromosome 1"/>
</dbReference>
<dbReference type="GO" id="GO:0009986">
    <property type="term" value="C:cell surface"/>
    <property type="evidence" value="ECO:0007669"/>
    <property type="project" value="UniProtKB-SubCell"/>
</dbReference>
<dbReference type="GO" id="GO:0005576">
    <property type="term" value="C:extracellular region"/>
    <property type="evidence" value="ECO:0007669"/>
    <property type="project" value="UniProtKB-SubCell"/>
</dbReference>
<dbReference type="GO" id="GO:0000015">
    <property type="term" value="C:phosphopyruvate hydratase complex"/>
    <property type="evidence" value="ECO:0007669"/>
    <property type="project" value="InterPro"/>
</dbReference>
<dbReference type="GO" id="GO:0000287">
    <property type="term" value="F:magnesium ion binding"/>
    <property type="evidence" value="ECO:0007669"/>
    <property type="project" value="UniProtKB-UniRule"/>
</dbReference>
<dbReference type="GO" id="GO:0004634">
    <property type="term" value="F:phosphopyruvate hydratase activity"/>
    <property type="evidence" value="ECO:0007669"/>
    <property type="project" value="UniProtKB-UniRule"/>
</dbReference>
<dbReference type="GO" id="GO:0006096">
    <property type="term" value="P:glycolytic process"/>
    <property type="evidence" value="ECO:0007669"/>
    <property type="project" value="UniProtKB-UniRule"/>
</dbReference>
<dbReference type="CDD" id="cd03313">
    <property type="entry name" value="enolase"/>
    <property type="match status" value="1"/>
</dbReference>
<dbReference type="Gene3D" id="3.20.20.120">
    <property type="entry name" value="Enolase-like C-terminal domain"/>
    <property type="match status" value="1"/>
</dbReference>
<dbReference type="Gene3D" id="3.30.390.10">
    <property type="entry name" value="Enolase-like, N-terminal domain"/>
    <property type="match status" value="1"/>
</dbReference>
<dbReference type="HAMAP" id="MF_00318">
    <property type="entry name" value="Enolase"/>
    <property type="match status" value="1"/>
</dbReference>
<dbReference type="InterPro" id="IPR000941">
    <property type="entry name" value="Enolase"/>
</dbReference>
<dbReference type="InterPro" id="IPR036849">
    <property type="entry name" value="Enolase-like_C_sf"/>
</dbReference>
<dbReference type="InterPro" id="IPR029017">
    <property type="entry name" value="Enolase-like_N"/>
</dbReference>
<dbReference type="InterPro" id="IPR020810">
    <property type="entry name" value="Enolase_C"/>
</dbReference>
<dbReference type="InterPro" id="IPR020809">
    <property type="entry name" value="Enolase_CS"/>
</dbReference>
<dbReference type="InterPro" id="IPR020811">
    <property type="entry name" value="Enolase_N"/>
</dbReference>
<dbReference type="NCBIfam" id="TIGR01060">
    <property type="entry name" value="eno"/>
    <property type="match status" value="1"/>
</dbReference>
<dbReference type="PANTHER" id="PTHR11902">
    <property type="entry name" value="ENOLASE"/>
    <property type="match status" value="1"/>
</dbReference>
<dbReference type="PANTHER" id="PTHR11902:SF1">
    <property type="entry name" value="ENOLASE"/>
    <property type="match status" value="1"/>
</dbReference>
<dbReference type="Pfam" id="PF00113">
    <property type="entry name" value="Enolase_C"/>
    <property type="match status" value="1"/>
</dbReference>
<dbReference type="Pfam" id="PF03952">
    <property type="entry name" value="Enolase_N"/>
    <property type="match status" value="1"/>
</dbReference>
<dbReference type="PIRSF" id="PIRSF001400">
    <property type="entry name" value="Enolase"/>
    <property type="match status" value="1"/>
</dbReference>
<dbReference type="PRINTS" id="PR00148">
    <property type="entry name" value="ENOLASE"/>
</dbReference>
<dbReference type="SFLD" id="SFLDS00001">
    <property type="entry name" value="Enolase"/>
    <property type="match status" value="1"/>
</dbReference>
<dbReference type="SFLD" id="SFLDF00002">
    <property type="entry name" value="enolase"/>
    <property type="match status" value="1"/>
</dbReference>
<dbReference type="SMART" id="SM01192">
    <property type="entry name" value="Enolase_C"/>
    <property type="match status" value="1"/>
</dbReference>
<dbReference type="SMART" id="SM01193">
    <property type="entry name" value="Enolase_N"/>
    <property type="match status" value="1"/>
</dbReference>
<dbReference type="SUPFAM" id="SSF51604">
    <property type="entry name" value="Enolase C-terminal domain-like"/>
    <property type="match status" value="1"/>
</dbReference>
<dbReference type="SUPFAM" id="SSF54826">
    <property type="entry name" value="Enolase N-terminal domain-like"/>
    <property type="match status" value="1"/>
</dbReference>
<dbReference type="PROSITE" id="PS00164">
    <property type="entry name" value="ENOLASE"/>
    <property type="match status" value="1"/>
</dbReference>
<organism>
    <name type="scientific">Halorubrum lacusprofundi (strain ATCC 49239 / DSM 5036 / JCM 8891 / ACAM 34)</name>
    <dbReference type="NCBI Taxonomy" id="416348"/>
    <lineage>
        <taxon>Archaea</taxon>
        <taxon>Methanobacteriati</taxon>
        <taxon>Methanobacteriota</taxon>
        <taxon>Stenosarchaea group</taxon>
        <taxon>Halobacteria</taxon>
        <taxon>Halobacteriales</taxon>
        <taxon>Haloferacaceae</taxon>
        <taxon>Halorubrum</taxon>
    </lineage>
</organism>